<feature type="chain" id="PRO_0000195459" description="Peptidoglycan D,D-transpeptidase FtsI">
    <location>
        <begin position="1"/>
        <end position="568"/>
    </location>
</feature>
<feature type="transmembrane region" description="Helical" evidence="1">
    <location>
        <begin position="19"/>
        <end position="39"/>
    </location>
</feature>
<feature type="active site" description="Acyl-ester intermediate" evidence="1">
    <location>
        <position position="302"/>
    </location>
</feature>
<sequence length="568" mass="63939">MNLFKEKKIKKIIYINWRFVTLCSIVFLFLVILTLRIIFLQIINSKKLAYEGDRRTLRIQSVINRRGIINDRLGYPLAVAVPVNAVFIDPTMITNKNDIKNNIRWKALSEILSIPLNKLIFFINSDKNIKFIYLARQINPEIGDYIKALKLPGVFLIEESKRYYPTGAIAAQLIGINNIDGEGIEGIEKSFNSYLTGTPGKRKIRKDNQGQIIENESLINKSNSNNLILSIDKKLQTIVYQKLNNAVNENQADFGIAILINIETGEILAMANSPSYNPNNMQYMINKNLRNKAITDIFEPGSTVKPIVIMEALKRGIIKKNSIINTKPYFIKKHKITDVAYHEKLNITGILKKSSNVGVSKIALSMNTSELINSYIKFGLGQPTNLGLIGEQKGFLPKKKKLSDLEKATFSFGYGLMITPLQLARLYTIIGSYGIYRPLSIIKIDHPLYEKRIFPKRYVKNVIHMMETVAHPGEGGSQAAIKGYRVAIKTGTAKKVGIHGYYIKKYIAYTAGIAPASNPKFSLTIIIDNPKGEKYYGGAVSAPVFSKIMKLVLKEMKIKPDNLKNKLS</sequence>
<dbReference type="EC" id="3.4.16.4" evidence="1"/>
<dbReference type="EMBL" id="AF060492">
    <property type="protein sequence ID" value="AAC32337.1"/>
    <property type="molecule type" value="Genomic_DNA"/>
</dbReference>
<dbReference type="EMBL" id="AE013218">
    <property type="protein sequence ID" value="AAM67776.1"/>
    <property type="molecule type" value="Genomic_DNA"/>
</dbReference>
<dbReference type="RefSeq" id="WP_011053743.1">
    <property type="nucleotide sequence ID" value="NC_004061.1"/>
</dbReference>
<dbReference type="SMR" id="O85297"/>
<dbReference type="STRING" id="198804.BUsg_216"/>
<dbReference type="GeneID" id="93003682"/>
<dbReference type="KEGG" id="bas:BUsg_216"/>
<dbReference type="eggNOG" id="COG0768">
    <property type="taxonomic scope" value="Bacteria"/>
</dbReference>
<dbReference type="HOGENOM" id="CLU_009289_6_2_6"/>
<dbReference type="UniPathway" id="UPA00219"/>
<dbReference type="Proteomes" id="UP000000416">
    <property type="component" value="Chromosome"/>
</dbReference>
<dbReference type="GO" id="GO:0005886">
    <property type="term" value="C:plasma membrane"/>
    <property type="evidence" value="ECO:0007669"/>
    <property type="project" value="UniProtKB-SubCell"/>
</dbReference>
<dbReference type="GO" id="GO:0008658">
    <property type="term" value="F:penicillin binding"/>
    <property type="evidence" value="ECO:0007669"/>
    <property type="project" value="InterPro"/>
</dbReference>
<dbReference type="GO" id="GO:0008955">
    <property type="term" value="F:peptidoglycan glycosyltransferase activity"/>
    <property type="evidence" value="ECO:0007669"/>
    <property type="project" value="InterPro"/>
</dbReference>
<dbReference type="GO" id="GO:0009002">
    <property type="term" value="F:serine-type D-Ala-D-Ala carboxypeptidase activity"/>
    <property type="evidence" value="ECO:0007669"/>
    <property type="project" value="UniProtKB-UniRule"/>
</dbReference>
<dbReference type="GO" id="GO:0071555">
    <property type="term" value="P:cell wall organization"/>
    <property type="evidence" value="ECO:0007669"/>
    <property type="project" value="UniProtKB-KW"/>
</dbReference>
<dbReference type="GO" id="GO:0000917">
    <property type="term" value="P:division septum assembly"/>
    <property type="evidence" value="ECO:0007669"/>
    <property type="project" value="UniProtKB-KW"/>
</dbReference>
<dbReference type="GO" id="GO:0043093">
    <property type="term" value="P:FtsZ-dependent cytokinesis"/>
    <property type="evidence" value="ECO:0007669"/>
    <property type="project" value="UniProtKB-UniRule"/>
</dbReference>
<dbReference type="GO" id="GO:0009252">
    <property type="term" value="P:peptidoglycan biosynthetic process"/>
    <property type="evidence" value="ECO:0007669"/>
    <property type="project" value="UniProtKB-UniRule"/>
</dbReference>
<dbReference type="GO" id="GO:0006508">
    <property type="term" value="P:proteolysis"/>
    <property type="evidence" value="ECO:0007669"/>
    <property type="project" value="UniProtKB-KW"/>
</dbReference>
<dbReference type="GO" id="GO:0008360">
    <property type="term" value="P:regulation of cell shape"/>
    <property type="evidence" value="ECO:0007669"/>
    <property type="project" value="UniProtKB-KW"/>
</dbReference>
<dbReference type="Gene3D" id="1.10.150.770">
    <property type="match status" value="1"/>
</dbReference>
<dbReference type="Gene3D" id="3.30.450.330">
    <property type="match status" value="1"/>
</dbReference>
<dbReference type="Gene3D" id="3.40.710.10">
    <property type="entry name" value="DD-peptidase/beta-lactamase superfamily"/>
    <property type="match status" value="1"/>
</dbReference>
<dbReference type="Gene3D" id="3.90.1310.10">
    <property type="entry name" value="Penicillin-binding protein 2a (Domain 2)"/>
    <property type="match status" value="1"/>
</dbReference>
<dbReference type="HAMAP" id="MF_02080">
    <property type="entry name" value="FtsI_transpept"/>
    <property type="match status" value="1"/>
</dbReference>
<dbReference type="InterPro" id="IPR050515">
    <property type="entry name" value="Bact_Transpept/Beta-Lactamase"/>
</dbReference>
<dbReference type="InterPro" id="IPR012338">
    <property type="entry name" value="Beta-lactam/transpept-like"/>
</dbReference>
<dbReference type="InterPro" id="IPR037532">
    <property type="entry name" value="FtsI_transpept"/>
</dbReference>
<dbReference type="InterPro" id="IPR005311">
    <property type="entry name" value="PBP_dimer"/>
</dbReference>
<dbReference type="InterPro" id="IPR036138">
    <property type="entry name" value="PBP_dimer_sf"/>
</dbReference>
<dbReference type="InterPro" id="IPR001460">
    <property type="entry name" value="PCN-bd_Tpept"/>
</dbReference>
<dbReference type="NCBIfam" id="NF011685">
    <property type="entry name" value="PRK15105.1"/>
    <property type="match status" value="1"/>
</dbReference>
<dbReference type="PANTHER" id="PTHR30627">
    <property type="entry name" value="PEPTIDOGLYCAN D,D-TRANSPEPTIDASE"/>
    <property type="match status" value="1"/>
</dbReference>
<dbReference type="PANTHER" id="PTHR30627:SF1">
    <property type="entry name" value="PEPTIDOGLYCAN D,D-TRANSPEPTIDASE FTSI"/>
    <property type="match status" value="1"/>
</dbReference>
<dbReference type="Pfam" id="PF03717">
    <property type="entry name" value="PBP_dimer"/>
    <property type="match status" value="1"/>
</dbReference>
<dbReference type="Pfam" id="PF00905">
    <property type="entry name" value="Transpeptidase"/>
    <property type="match status" value="1"/>
</dbReference>
<dbReference type="SUPFAM" id="SSF56601">
    <property type="entry name" value="beta-lactamase/transpeptidase-like"/>
    <property type="match status" value="1"/>
</dbReference>
<dbReference type="SUPFAM" id="SSF56519">
    <property type="entry name" value="Penicillin binding protein dimerisation domain"/>
    <property type="match status" value="1"/>
</dbReference>
<proteinExistence type="inferred from homology"/>
<name>FTSI_BUCAP</name>
<organism>
    <name type="scientific">Buchnera aphidicola subsp. Schizaphis graminum (strain Sg)</name>
    <dbReference type="NCBI Taxonomy" id="198804"/>
    <lineage>
        <taxon>Bacteria</taxon>
        <taxon>Pseudomonadati</taxon>
        <taxon>Pseudomonadota</taxon>
        <taxon>Gammaproteobacteria</taxon>
        <taxon>Enterobacterales</taxon>
        <taxon>Erwiniaceae</taxon>
        <taxon>Buchnera</taxon>
    </lineage>
</organism>
<comment type="function">
    <text evidence="1">Catalyzes cross-linking of the peptidoglycan cell wall at the division septum.</text>
</comment>
<comment type="catalytic activity">
    <reaction evidence="1">
        <text>Preferential cleavage: (Ac)2-L-Lys-D-Ala-|-D-Ala. Also transpeptidation of peptidyl-alanyl moieties that are N-acyl substituents of D-alanine.</text>
        <dbReference type="EC" id="3.4.16.4"/>
    </reaction>
</comment>
<comment type="pathway">
    <text evidence="1">Cell wall biogenesis; peptidoglycan biosynthesis.</text>
</comment>
<comment type="subcellular location">
    <subcellularLocation>
        <location evidence="1">Cell inner membrane</location>
        <topology evidence="1">Single-pass membrane protein</topology>
    </subcellularLocation>
</comment>
<comment type="similarity">
    <text evidence="1">Belongs to the transpeptidase family. FtsI subfamily.</text>
</comment>
<gene>
    <name evidence="1" type="primary">ftsI</name>
    <name type="ordered locus">BUsg_216</name>
</gene>
<accession>O85297</accession>
<evidence type="ECO:0000255" key="1">
    <source>
        <dbReference type="HAMAP-Rule" id="MF_02080"/>
    </source>
</evidence>
<protein>
    <recommendedName>
        <fullName evidence="1">Peptidoglycan D,D-transpeptidase FtsI</fullName>
        <ecNumber evidence="1">3.4.16.4</ecNumber>
    </recommendedName>
    <alternativeName>
        <fullName evidence="1">Penicillin-binding protein 3</fullName>
        <shortName evidence="1">PBP-3</shortName>
    </alternativeName>
</protein>
<reference key="1">
    <citation type="journal article" date="1998" name="Curr. Microbiol.">
        <title>Sequence analysis of a DNA fragment from Buchnera aphidicola (Aphid endosymbiont) containing the genes dapD-htrA-ilvI-ilvH-ftsL-ftsI-murE.</title>
        <authorList>
            <person name="Thao M.L."/>
            <person name="Baumann P."/>
        </authorList>
    </citation>
    <scope>NUCLEOTIDE SEQUENCE [GENOMIC DNA]</scope>
</reference>
<reference key="2">
    <citation type="journal article" date="2002" name="Science">
        <title>50 million years of genomic stasis in endosymbiotic bacteria.</title>
        <authorList>
            <person name="Tamas I."/>
            <person name="Klasson L."/>
            <person name="Canbaeck B."/>
            <person name="Naeslund A.K."/>
            <person name="Eriksson A.-S."/>
            <person name="Wernegreen J.J."/>
            <person name="Sandstroem J.P."/>
            <person name="Moran N.A."/>
            <person name="Andersson S.G.E."/>
        </authorList>
    </citation>
    <scope>NUCLEOTIDE SEQUENCE [LARGE SCALE GENOMIC DNA]</scope>
    <source>
        <strain>Sg</strain>
    </source>
</reference>
<keyword id="KW-0121">Carboxypeptidase</keyword>
<keyword id="KW-0131">Cell cycle</keyword>
<keyword id="KW-0132">Cell division</keyword>
<keyword id="KW-0997">Cell inner membrane</keyword>
<keyword id="KW-1003">Cell membrane</keyword>
<keyword id="KW-0133">Cell shape</keyword>
<keyword id="KW-0961">Cell wall biogenesis/degradation</keyword>
<keyword id="KW-0378">Hydrolase</keyword>
<keyword id="KW-0472">Membrane</keyword>
<keyword id="KW-0573">Peptidoglycan synthesis</keyword>
<keyword id="KW-0645">Protease</keyword>
<keyword id="KW-0717">Septation</keyword>
<keyword id="KW-0812">Transmembrane</keyword>
<keyword id="KW-1133">Transmembrane helix</keyword>